<name>LBD41_ARATH</name>
<protein>
    <recommendedName>
        <fullName>LOB domain-containing protein 41</fullName>
    </recommendedName>
    <alternativeName>
        <fullName>ASYMMETRIC LEAVES 2-like protein 38</fullName>
        <shortName>AS2-like protein 38</shortName>
    </alternativeName>
</protein>
<gene>
    <name type="primary">LBD41</name>
    <name type="synonym">ASL38</name>
    <name type="ordered locus">At3g02550</name>
    <name type="ORF">F16B3.18</name>
</gene>
<organism>
    <name type="scientific">Arabidopsis thaliana</name>
    <name type="common">Mouse-ear cress</name>
    <dbReference type="NCBI Taxonomy" id="3702"/>
    <lineage>
        <taxon>Eukaryota</taxon>
        <taxon>Viridiplantae</taxon>
        <taxon>Streptophyta</taxon>
        <taxon>Embryophyta</taxon>
        <taxon>Tracheophyta</taxon>
        <taxon>Spermatophyta</taxon>
        <taxon>Magnoliopsida</taxon>
        <taxon>eudicotyledons</taxon>
        <taxon>Gunneridae</taxon>
        <taxon>Pentapetalae</taxon>
        <taxon>rosids</taxon>
        <taxon>malvids</taxon>
        <taxon>Brassicales</taxon>
        <taxon>Brassicaceae</taxon>
        <taxon>Camelineae</taxon>
        <taxon>Arabidopsis</taxon>
    </lineage>
</organism>
<dbReference type="EMBL" id="AF447895">
    <property type="protein sequence ID" value="AAL38040.1"/>
    <property type="molecule type" value="mRNA"/>
</dbReference>
<dbReference type="EMBL" id="AB473871">
    <property type="protein sequence ID" value="BAH10582.1"/>
    <property type="molecule type" value="mRNA"/>
</dbReference>
<dbReference type="EMBL" id="AC021640">
    <property type="protein sequence ID" value="AAF32462.1"/>
    <property type="molecule type" value="Genomic_DNA"/>
</dbReference>
<dbReference type="EMBL" id="CP002686">
    <property type="protein sequence ID" value="AEE73827.1"/>
    <property type="molecule type" value="Genomic_DNA"/>
</dbReference>
<dbReference type="EMBL" id="AY090370">
    <property type="protein sequence ID" value="AAL91273.1"/>
    <property type="molecule type" value="mRNA"/>
</dbReference>
<dbReference type="EMBL" id="AY122896">
    <property type="protein sequence ID" value="AAM67429.1"/>
    <property type="molecule type" value="mRNA"/>
</dbReference>
<dbReference type="EMBL" id="AY086061">
    <property type="protein sequence ID" value="AAM63270.1"/>
    <property type="molecule type" value="mRNA"/>
</dbReference>
<dbReference type="RefSeq" id="NP_566175.1">
    <property type="nucleotide sequence ID" value="NM_111122.5"/>
</dbReference>
<dbReference type="BioGRID" id="6445">
    <property type="interactions" value="15"/>
</dbReference>
<dbReference type="FunCoup" id="Q9M886">
    <property type="interactions" value="13"/>
</dbReference>
<dbReference type="IntAct" id="Q9M886">
    <property type="interactions" value="4"/>
</dbReference>
<dbReference type="STRING" id="3702.Q9M886"/>
<dbReference type="iPTMnet" id="Q9M886"/>
<dbReference type="PaxDb" id="3702-AT3G02550.1"/>
<dbReference type="ProteomicsDB" id="237082"/>
<dbReference type="EnsemblPlants" id="AT3G02550.1">
    <property type="protein sequence ID" value="AT3G02550.1"/>
    <property type="gene ID" value="AT3G02550"/>
</dbReference>
<dbReference type="GeneID" id="821112"/>
<dbReference type="Gramene" id="AT3G02550.1">
    <property type="protein sequence ID" value="AT3G02550.1"/>
    <property type="gene ID" value="AT3G02550"/>
</dbReference>
<dbReference type="KEGG" id="ath:AT3G02550"/>
<dbReference type="Araport" id="AT3G02550"/>
<dbReference type="TAIR" id="AT3G02550">
    <property type="gene designation" value="LBD41"/>
</dbReference>
<dbReference type="eggNOG" id="ENOG502QV9P">
    <property type="taxonomic scope" value="Eukaryota"/>
</dbReference>
<dbReference type="HOGENOM" id="CLU_054665_0_1_1"/>
<dbReference type="InParanoid" id="Q9M886"/>
<dbReference type="OMA" id="CKTELML"/>
<dbReference type="PhylomeDB" id="Q9M886"/>
<dbReference type="PRO" id="PR:Q9M886"/>
<dbReference type="Proteomes" id="UP000006548">
    <property type="component" value="Chromosome 3"/>
</dbReference>
<dbReference type="ExpressionAtlas" id="Q9M886">
    <property type="expression patterns" value="baseline and differential"/>
</dbReference>
<dbReference type="GO" id="GO:0071456">
    <property type="term" value="P:cellular response to hypoxia"/>
    <property type="evidence" value="ECO:0007007"/>
    <property type="project" value="TAIR"/>
</dbReference>
<dbReference type="GO" id="GO:0006355">
    <property type="term" value="P:regulation of DNA-templated transcription"/>
    <property type="evidence" value="ECO:0000314"/>
    <property type="project" value="TAIR"/>
</dbReference>
<dbReference type="InterPro" id="IPR004883">
    <property type="entry name" value="LOB"/>
</dbReference>
<dbReference type="InterPro" id="IPR017414">
    <property type="entry name" value="LOBD"/>
</dbReference>
<dbReference type="PANTHER" id="PTHR31304">
    <property type="entry name" value="LOB DOMAIN-CONTAINING PROTEIN 38"/>
    <property type="match status" value="1"/>
</dbReference>
<dbReference type="PANTHER" id="PTHR31304:SF72">
    <property type="entry name" value="LOB DOMAIN-CONTAINING PROTEIN 41"/>
    <property type="match status" value="1"/>
</dbReference>
<dbReference type="Pfam" id="PF03195">
    <property type="entry name" value="LOB"/>
    <property type="match status" value="1"/>
</dbReference>
<dbReference type="PIRSF" id="PIRSF038155">
    <property type="entry name" value="Protein_ASYMMETRIC_LEAVES"/>
    <property type="match status" value="1"/>
</dbReference>
<dbReference type="PROSITE" id="PS50891">
    <property type="entry name" value="LOB"/>
    <property type="match status" value="1"/>
</dbReference>
<proteinExistence type="evidence at transcript level"/>
<accession>Q9M886</accession>
<accession>B7XG92</accession>
<accession>Q8LDD8</accession>
<sequence>MRMSCNGCRVLRKGCSEDCSIRPCLAWIKSPEAQANATVFLAKFYGRAGLMNLINAGPNHLRPGIFRSLLHEACGRIVNPIYGSVGLLWSGNWQLCQDAVEAVMKGEPVKEIATDAATIGQGPPLKIYDIRHISKDDNSAAAATGSTDLKLAKTRRAKRVSTVAIQAESEGKSDEASHDSSLSHQSEIVAAHEGESKESESNVSEVLAFSPPAVKGSGEIKLDLTLRLEPVSRAYHVVPVKKRRIGVFGTCQKESTCKTELML</sequence>
<feature type="chain" id="PRO_0000132291" description="LOB domain-containing protein 41">
    <location>
        <begin position="1"/>
        <end position="263"/>
    </location>
</feature>
<feature type="domain" description="LOB" evidence="1">
    <location>
        <begin position="3"/>
        <end position="109"/>
    </location>
</feature>
<feature type="region of interest" description="Disordered" evidence="2">
    <location>
        <begin position="162"/>
        <end position="204"/>
    </location>
</feature>
<feature type="compositionally biased region" description="Basic and acidic residues" evidence="2">
    <location>
        <begin position="169"/>
        <end position="178"/>
    </location>
</feature>
<feature type="compositionally biased region" description="Basic and acidic residues" evidence="2">
    <location>
        <begin position="190"/>
        <end position="200"/>
    </location>
</feature>
<feature type="sequence conflict" description="In Ref. 6; AAM63270." evidence="4" ref="6">
    <original>V</original>
    <variation>I</variation>
    <location>
        <position position="109"/>
    </location>
</feature>
<reference key="1">
    <citation type="journal article" date="2002" name="Plant Physiol.">
        <title>The LATERAL ORGAN BOUNDARIES gene defines a novel, plant-specific gene family.</title>
        <authorList>
            <person name="Shuai B."/>
            <person name="Reynaga-Pena C.G."/>
            <person name="Springer P.S."/>
        </authorList>
    </citation>
    <scope>NUCLEOTIDE SEQUENCE [MRNA]</scope>
    <scope>TISSUE SPECIFICITY</scope>
    <scope>GENE FAMILY</scope>
    <scope>NOMENCLATURE</scope>
    <source>
        <strain>cv. Columbia</strain>
    </source>
</reference>
<reference key="2">
    <citation type="journal article" date="2009" name="Plant J.">
        <title>Characterization of genes in the ASYMMETRIC LEAVES2/LATERAL ORGAN BOUNDARIES (AS2/LOB) family in Arabidopsis thaliana, and functional and molecular comparisons between AS2 and other family members.</title>
        <authorList>
            <person name="Matsumura Y."/>
            <person name="Iwakawa H."/>
            <person name="Machida Y."/>
            <person name="Machida C."/>
        </authorList>
    </citation>
    <scope>NUCLEOTIDE SEQUENCE [MRNA]</scope>
    <source>
        <strain>cv. Columbia</strain>
    </source>
</reference>
<reference key="3">
    <citation type="journal article" date="2000" name="Nature">
        <title>Sequence and analysis of chromosome 3 of the plant Arabidopsis thaliana.</title>
        <authorList>
            <person name="Salanoubat M."/>
            <person name="Lemcke K."/>
            <person name="Rieger M."/>
            <person name="Ansorge W."/>
            <person name="Unseld M."/>
            <person name="Fartmann B."/>
            <person name="Valle G."/>
            <person name="Bloecker H."/>
            <person name="Perez-Alonso M."/>
            <person name="Obermaier B."/>
            <person name="Delseny M."/>
            <person name="Boutry M."/>
            <person name="Grivell L.A."/>
            <person name="Mache R."/>
            <person name="Puigdomenech P."/>
            <person name="De Simone V."/>
            <person name="Choisne N."/>
            <person name="Artiguenave F."/>
            <person name="Robert C."/>
            <person name="Brottier P."/>
            <person name="Wincker P."/>
            <person name="Cattolico L."/>
            <person name="Weissenbach J."/>
            <person name="Saurin W."/>
            <person name="Quetier F."/>
            <person name="Schaefer M."/>
            <person name="Mueller-Auer S."/>
            <person name="Gabel C."/>
            <person name="Fuchs M."/>
            <person name="Benes V."/>
            <person name="Wurmbach E."/>
            <person name="Drzonek H."/>
            <person name="Erfle H."/>
            <person name="Jordan N."/>
            <person name="Bangert S."/>
            <person name="Wiedelmann R."/>
            <person name="Kranz H."/>
            <person name="Voss H."/>
            <person name="Holland R."/>
            <person name="Brandt P."/>
            <person name="Nyakatura G."/>
            <person name="Vezzi A."/>
            <person name="D'Angelo M."/>
            <person name="Pallavicini A."/>
            <person name="Toppo S."/>
            <person name="Simionati B."/>
            <person name="Conrad A."/>
            <person name="Hornischer K."/>
            <person name="Kauer G."/>
            <person name="Loehnert T.-H."/>
            <person name="Nordsiek G."/>
            <person name="Reichelt J."/>
            <person name="Scharfe M."/>
            <person name="Schoen O."/>
            <person name="Bargues M."/>
            <person name="Terol J."/>
            <person name="Climent J."/>
            <person name="Navarro P."/>
            <person name="Collado C."/>
            <person name="Perez-Perez A."/>
            <person name="Ottenwaelder B."/>
            <person name="Duchemin D."/>
            <person name="Cooke R."/>
            <person name="Laudie M."/>
            <person name="Berger-Llauro C."/>
            <person name="Purnelle B."/>
            <person name="Masuy D."/>
            <person name="de Haan M."/>
            <person name="Maarse A.C."/>
            <person name="Alcaraz J.-P."/>
            <person name="Cottet A."/>
            <person name="Casacuberta E."/>
            <person name="Monfort A."/>
            <person name="Argiriou A."/>
            <person name="Flores M."/>
            <person name="Liguori R."/>
            <person name="Vitale D."/>
            <person name="Mannhaupt G."/>
            <person name="Haase D."/>
            <person name="Schoof H."/>
            <person name="Rudd S."/>
            <person name="Zaccaria P."/>
            <person name="Mewes H.-W."/>
            <person name="Mayer K.F.X."/>
            <person name="Kaul S."/>
            <person name="Town C.D."/>
            <person name="Koo H.L."/>
            <person name="Tallon L.J."/>
            <person name="Jenkins J."/>
            <person name="Rooney T."/>
            <person name="Rizzo M."/>
            <person name="Walts A."/>
            <person name="Utterback T."/>
            <person name="Fujii C.Y."/>
            <person name="Shea T.P."/>
            <person name="Creasy T.H."/>
            <person name="Haas B."/>
            <person name="Maiti R."/>
            <person name="Wu D."/>
            <person name="Peterson J."/>
            <person name="Van Aken S."/>
            <person name="Pai G."/>
            <person name="Militscher J."/>
            <person name="Sellers P."/>
            <person name="Gill J.E."/>
            <person name="Feldblyum T.V."/>
            <person name="Preuss D."/>
            <person name="Lin X."/>
            <person name="Nierman W.C."/>
            <person name="Salzberg S.L."/>
            <person name="White O."/>
            <person name="Venter J.C."/>
            <person name="Fraser C.M."/>
            <person name="Kaneko T."/>
            <person name="Nakamura Y."/>
            <person name="Sato S."/>
            <person name="Kato T."/>
            <person name="Asamizu E."/>
            <person name="Sasamoto S."/>
            <person name="Kimura T."/>
            <person name="Idesawa K."/>
            <person name="Kawashima K."/>
            <person name="Kishida Y."/>
            <person name="Kiyokawa C."/>
            <person name="Kohara M."/>
            <person name="Matsumoto M."/>
            <person name="Matsuno A."/>
            <person name="Muraki A."/>
            <person name="Nakayama S."/>
            <person name="Nakazaki N."/>
            <person name="Shinpo S."/>
            <person name="Takeuchi C."/>
            <person name="Wada T."/>
            <person name="Watanabe A."/>
            <person name="Yamada M."/>
            <person name="Yasuda M."/>
            <person name="Tabata S."/>
        </authorList>
    </citation>
    <scope>NUCLEOTIDE SEQUENCE [LARGE SCALE GENOMIC DNA]</scope>
    <source>
        <strain>cv. Columbia</strain>
    </source>
</reference>
<reference key="4">
    <citation type="journal article" date="2017" name="Plant J.">
        <title>Araport11: a complete reannotation of the Arabidopsis thaliana reference genome.</title>
        <authorList>
            <person name="Cheng C.Y."/>
            <person name="Krishnakumar V."/>
            <person name="Chan A.P."/>
            <person name="Thibaud-Nissen F."/>
            <person name="Schobel S."/>
            <person name="Town C.D."/>
        </authorList>
    </citation>
    <scope>GENOME REANNOTATION</scope>
    <source>
        <strain>cv. Columbia</strain>
    </source>
</reference>
<reference key="5">
    <citation type="journal article" date="2003" name="Science">
        <title>Empirical analysis of transcriptional activity in the Arabidopsis genome.</title>
        <authorList>
            <person name="Yamada K."/>
            <person name="Lim J."/>
            <person name="Dale J.M."/>
            <person name="Chen H."/>
            <person name="Shinn P."/>
            <person name="Palm C.J."/>
            <person name="Southwick A.M."/>
            <person name="Wu H.C."/>
            <person name="Kim C.J."/>
            <person name="Nguyen M."/>
            <person name="Pham P.K."/>
            <person name="Cheuk R.F."/>
            <person name="Karlin-Newmann G."/>
            <person name="Liu S.X."/>
            <person name="Lam B."/>
            <person name="Sakano H."/>
            <person name="Wu T."/>
            <person name="Yu G."/>
            <person name="Miranda M."/>
            <person name="Quach H.L."/>
            <person name="Tripp M."/>
            <person name="Chang C.H."/>
            <person name="Lee J.M."/>
            <person name="Toriumi M.J."/>
            <person name="Chan M.M."/>
            <person name="Tang C.C."/>
            <person name="Onodera C.S."/>
            <person name="Deng J.M."/>
            <person name="Akiyama K."/>
            <person name="Ansari Y."/>
            <person name="Arakawa T."/>
            <person name="Banh J."/>
            <person name="Banno F."/>
            <person name="Bowser L."/>
            <person name="Brooks S.Y."/>
            <person name="Carninci P."/>
            <person name="Chao Q."/>
            <person name="Choy N."/>
            <person name="Enju A."/>
            <person name="Goldsmith A.D."/>
            <person name="Gurjal M."/>
            <person name="Hansen N.F."/>
            <person name="Hayashizaki Y."/>
            <person name="Johnson-Hopson C."/>
            <person name="Hsuan V.W."/>
            <person name="Iida K."/>
            <person name="Karnes M."/>
            <person name="Khan S."/>
            <person name="Koesema E."/>
            <person name="Ishida J."/>
            <person name="Jiang P.X."/>
            <person name="Jones T."/>
            <person name="Kawai J."/>
            <person name="Kamiya A."/>
            <person name="Meyers C."/>
            <person name="Nakajima M."/>
            <person name="Narusaka M."/>
            <person name="Seki M."/>
            <person name="Sakurai T."/>
            <person name="Satou M."/>
            <person name="Tamse R."/>
            <person name="Vaysberg M."/>
            <person name="Wallender E.K."/>
            <person name="Wong C."/>
            <person name="Yamamura Y."/>
            <person name="Yuan S."/>
            <person name="Shinozaki K."/>
            <person name="Davis R.W."/>
            <person name="Theologis A."/>
            <person name="Ecker J.R."/>
        </authorList>
    </citation>
    <scope>NUCLEOTIDE SEQUENCE [LARGE SCALE MRNA]</scope>
    <source>
        <strain>cv. Columbia</strain>
    </source>
</reference>
<reference key="6">
    <citation type="submission" date="2002-03" db="EMBL/GenBank/DDBJ databases">
        <title>Full-length cDNA from Arabidopsis thaliana.</title>
        <authorList>
            <person name="Brover V.V."/>
            <person name="Troukhan M.E."/>
            <person name="Alexandrov N.A."/>
            <person name="Lu Y.-P."/>
            <person name="Flavell R.B."/>
            <person name="Feldmann K.A."/>
        </authorList>
    </citation>
    <scope>NUCLEOTIDE SEQUENCE [LARGE SCALE MRNA]</scope>
</reference>
<reference key="7">
    <citation type="journal article" date="2002" name="Plant Cell Physiol.">
        <title>The ASYMMETRIC LEAVES2 gene of Arabidopsis thaliana, required for formation of a symmetric flat leaf lamina, encodes a member of a novel family of proteins characterized by cysteine repeats and a leucine zipper.</title>
        <authorList>
            <person name="Iwakawa H."/>
            <person name="Ueno Y."/>
            <person name="Semiarti E."/>
            <person name="Onouchi H."/>
            <person name="Kojima S."/>
            <person name="Tsukaya H."/>
            <person name="Hasebe M."/>
            <person name="Soma T."/>
            <person name="Ikezaki M."/>
            <person name="Machida C."/>
            <person name="Machida Y."/>
        </authorList>
    </citation>
    <scope>GENE FAMILY</scope>
    <scope>NOMENCLATURE</scope>
</reference>
<keyword id="KW-1185">Reference proteome</keyword>
<evidence type="ECO:0000255" key="1">
    <source>
        <dbReference type="PROSITE-ProRule" id="PRU00291"/>
    </source>
</evidence>
<evidence type="ECO:0000256" key="2">
    <source>
        <dbReference type="SAM" id="MobiDB-lite"/>
    </source>
</evidence>
<evidence type="ECO:0000269" key="3">
    <source>
    </source>
</evidence>
<evidence type="ECO:0000305" key="4"/>
<comment type="tissue specificity">
    <text evidence="3">Expressed in young shoots, roots, stems, leaves and flowers.</text>
</comment>
<comment type="similarity">
    <text evidence="4">Belongs to the LOB domain-containing protein family.</text>
</comment>